<feature type="chain" id="PRO_1000001509" description="Recombination protein RecR">
    <location>
        <begin position="1"/>
        <end position="198"/>
    </location>
</feature>
<feature type="domain" description="Toprim" evidence="1">
    <location>
        <begin position="80"/>
        <end position="175"/>
    </location>
</feature>
<feature type="zinc finger region" description="C4-type" evidence="1">
    <location>
        <begin position="57"/>
        <end position="72"/>
    </location>
</feature>
<dbReference type="EMBL" id="CP000485">
    <property type="protein sequence ID" value="ABK83442.1"/>
    <property type="molecule type" value="Genomic_DNA"/>
</dbReference>
<dbReference type="RefSeq" id="WP_000559169.1">
    <property type="nucleotide sequence ID" value="NC_008600.1"/>
</dbReference>
<dbReference type="SMR" id="A0R899"/>
<dbReference type="GeneID" id="93011050"/>
<dbReference type="KEGG" id="btl:BALH_0021"/>
<dbReference type="HOGENOM" id="CLU_060739_1_0_9"/>
<dbReference type="GO" id="GO:0003677">
    <property type="term" value="F:DNA binding"/>
    <property type="evidence" value="ECO:0007669"/>
    <property type="project" value="UniProtKB-UniRule"/>
</dbReference>
<dbReference type="GO" id="GO:0008270">
    <property type="term" value="F:zinc ion binding"/>
    <property type="evidence" value="ECO:0007669"/>
    <property type="project" value="UniProtKB-KW"/>
</dbReference>
<dbReference type="GO" id="GO:0006310">
    <property type="term" value="P:DNA recombination"/>
    <property type="evidence" value="ECO:0007669"/>
    <property type="project" value="UniProtKB-UniRule"/>
</dbReference>
<dbReference type="GO" id="GO:0006281">
    <property type="term" value="P:DNA repair"/>
    <property type="evidence" value="ECO:0007669"/>
    <property type="project" value="UniProtKB-UniRule"/>
</dbReference>
<dbReference type="CDD" id="cd01025">
    <property type="entry name" value="TOPRIM_recR"/>
    <property type="match status" value="1"/>
</dbReference>
<dbReference type="Gene3D" id="3.30.60.80">
    <property type="match status" value="1"/>
</dbReference>
<dbReference type="Gene3D" id="3.40.1360.10">
    <property type="match status" value="1"/>
</dbReference>
<dbReference type="Gene3D" id="6.10.250.240">
    <property type="match status" value="1"/>
</dbReference>
<dbReference type="Gene3D" id="1.10.8.420">
    <property type="entry name" value="RecR Domain 1"/>
    <property type="match status" value="1"/>
</dbReference>
<dbReference type="HAMAP" id="MF_00017">
    <property type="entry name" value="RecR"/>
    <property type="match status" value="1"/>
</dbReference>
<dbReference type="InterPro" id="IPR000093">
    <property type="entry name" value="DNA_Rcmb_RecR"/>
</dbReference>
<dbReference type="InterPro" id="IPR023627">
    <property type="entry name" value="Rcmb_RecR"/>
</dbReference>
<dbReference type="InterPro" id="IPR015967">
    <property type="entry name" value="Rcmb_RecR_Znf"/>
</dbReference>
<dbReference type="InterPro" id="IPR006171">
    <property type="entry name" value="TOPRIM_dom"/>
</dbReference>
<dbReference type="InterPro" id="IPR034137">
    <property type="entry name" value="TOPRIM_RecR"/>
</dbReference>
<dbReference type="NCBIfam" id="TIGR00615">
    <property type="entry name" value="recR"/>
    <property type="match status" value="1"/>
</dbReference>
<dbReference type="PANTHER" id="PTHR30446">
    <property type="entry name" value="RECOMBINATION PROTEIN RECR"/>
    <property type="match status" value="1"/>
</dbReference>
<dbReference type="PANTHER" id="PTHR30446:SF0">
    <property type="entry name" value="RECOMBINATION PROTEIN RECR"/>
    <property type="match status" value="1"/>
</dbReference>
<dbReference type="Pfam" id="PF21175">
    <property type="entry name" value="RecR_C"/>
    <property type="match status" value="1"/>
</dbReference>
<dbReference type="Pfam" id="PF21176">
    <property type="entry name" value="RecR_HhH"/>
    <property type="match status" value="1"/>
</dbReference>
<dbReference type="Pfam" id="PF02132">
    <property type="entry name" value="RecR_ZnF"/>
    <property type="match status" value="1"/>
</dbReference>
<dbReference type="Pfam" id="PF13662">
    <property type="entry name" value="Toprim_4"/>
    <property type="match status" value="1"/>
</dbReference>
<dbReference type="SMART" id="SM00493">
    <property type="entry name" value="TOPRIM"/>
    <property type="match status" value="1"/>
</dbReference>
<dbReference type="SUPFAM" id="SSF111304">
    <property type="entry name" value="Recombination protein RecR"/>
    <property type="match status" value="1"/>
</dbReference>
<dbReference type="PROSITE" id="PS01300">
    <property type="entry name" value="RECR"/>
    <property type="match status" value="1"/>
</dbReference>
<dbReference type="PROSITE" id="PS50880">
    <property type="entry name" value="TOPRIM"/>
    <property type="match status" value="1"/>
</dbReference>
<protein>
    <recommendedName>
        <fullName evidence="1">Recombination protein RecR</fullName>
    </recommendedName>
</protein>
<organism>
    <name type="scientific">Bacillus thuringiensis (strain Al Hakam)</name>
    <dbReference type="NCBI Taxonomy" id="412694"/>
    <lineage>
        <taxon>Bacteria</taxon>
        <taxon>Bacillati</taxon>
        <taxon>Bacillota</taxon>
        <taxon>Bacilli</taxon>
        <taxon>Bacillales</taxon>
        <taxon>Bacillaceae</taxon>
        <taxon>Bacillus</taxon>
        <taxon>Bacillus cereus group</taxon>
    </lineage>
</organism>
<name>RECR_BACAH</name>
<proteinExistence type="inferred from homology"/>
<comment type="function">
    <text evidence="1">May play a role in DNA repair. It seems to be involved in an RecBC-independent recombinational process of DNA repair. It may act with RecF and RecO.</text>
</comment>
<comment type="similarity">
    <text evidence="1">Belongs to the RecR family.</text>
</comment>
<gene>
    <name evidence="1" type="primary">recR</name>
    <name type="ordered locus">BALH_0021</name>
</gene>
<accession>A0R899</accession>
<keyword id="KW-0227">DNA damage</keyword>
<keyword id="KW-0233">DNA recombination</keyword>
<keyword id="KW-0234">DNA repair</keyword>
<keyword id="KW-0479">Metal-binding</keyword>
<keyword id="KW-0862">Zinc</keyword>
<keyword id="KW-0863">Zinc-finger</keyword>
<sequence>MHYPEPISKLIDSFMKLPGIGPKTAVRLAFFVLDMKEDDVLGFAKALVNAKRDLAYCSVCGHITDRDPCYICNDSHRDQSVVCVVQEPKDVIAMEKMKEYQGVYHVLRGAISPMEGIGPEDINIPQLLKRLHDETVQEVILATNPNIEGEATAMYISRLLKPTGIKVTRIAHGLPVGGDLEYADEVTLSKALEGRREV</sequence>
<evidence type="ECO:0000255" key="1">
    <source>
        <dbReference type="HAMAP-Rule" id="MF_00017"/>
    </source>
</evidence>
<reference key="1">
    <citation type="journal article" date="2007" name="J. Bacteriol.">
        <title>The complete genome sequence of Bacillus thuringiensis Al Hakam.</title>
        <authorList>
            <person name="Challacombe J.F."/>
            <person name="Altherr M.R."/>
            <person name="Xie G."/>
            <person name="Bhotika S.S."/>
            <person name="Brown N."/>
            <person name="Bruce D."/>
            <person name="Campbell C.S."/>
            <person name="Campbell M.L."/>
            <person name="Chen J."/>
            <person name="Chertkov O."/>
            <person name="Cleland C."/>
            <person name="Dimitrijevic M."/>
            <person name="Doggett N.A."/>
            <person name="Fawcett J.J."/>
            <person name="Glavina T."/>
            <person name="Goodwin L.A."/>
            <person name="Green L.D."/>
            <person name="Han C.S."/>
            <person name="Hill K.K."/>
            <person name="Hitchcock P."/>
            <person name="Jackson P.J."/>
            <person name="Keim P."/>
            <person name="Kewalramani A.R."/>
            <person name="Longmire J."/>
            <person name="Lucas S."/>
            <person name="Malfatti S."/>
            <person name="Martinez D."/>
            <person name="McMurry K."/>
            <person name="Meincke L.J."/>
            <person name="Misra M."/>
            <person name="Moseman B.L."/>
            <person name="Mundt M."/>
            <person name="Munk A.C."/>
            <person name="Okinaka R.T."/>
            <person name="Parson-Quintana B."/>
            <person name="Reilly L.P."/>
            <person name="Richardson P."/>
            <person name="Robinson D.L."/>
            <person name="Saunders E."/>
            <person name="Tapia R."/>
            <person name="Tesmer J.G."/>
            <person name="Thayer N."/>
            <person name="Thompson L.S."/>
            <person name="Tice H."/>
            <person name="Ticknor L.O."/>
            <person name="Wills P.L."/>
            <person name="Gilna P."/>
            <person name="Brettin T.S."/>
        </authorList>
    </citation>
    <scope>NUCLEOTIDE SEQUENCE [LARGE SCALE GENOMIC DNA]</scope>
    <source>
        <strain>Al Hakam</strain>
    </source>
</reference>